<comment type="function">
    <text evidence="1">Catalyzes the phosphorylation of the position 2 hydroxy group of 4-diphosphocytidyl-2C-methyl-D-erythritol.</text>
</comment>
<comment type="catalytic activity">
    <reaction evidence="1">
        <text>4-CDP-2-C-methyl-D-erythritol + ATP = 4-CDP-2-C-methyl-D-erythritol 2-phosphate + ADP + H(+)</text>
        <dbReference type="Rhea" id="RHEA:18437"/>
        <dbReference type="ChEBI" id="CHEBI:15378"/>
        <dbReference type="ChEBI" id="CHEBI:30616"/>
        <dbReference type="ChEBI" id="CHEBI:57823"/>
        <dbReference type="ChEBI" id="CHEBI:57919"/>
        <dbReference type="ChEBI" id="CHEBI:456216"/>
        <dbReference type="EC" id="2.7.1.148"/>
    </reaction>
</comment>
<comment type="pathway">
    <text evidence="1">Isoprenoid biosynthesis; isopentenyl diphosphate biosynthesis via DXP pathway; isopentenyl diphosphate from 1-deoxy-D-xylulose 5-phosphate: step 3/6.</text>
</comment>
<comment type="similarity">
    <text evidence="1">Belongs to the GHMP kinase family. IspE subfamily.</text>
</comment>
<keyword id="KW-0067">ATP-binding</keyword>
<keyword id="KW-0414">Isoprene biosynthesis</keyword>
<keyword id="KW-0418">Kinase</keyword>
<keyword id="KW-0547">Nucleotide-binding</keyword>
<keyword id="KW-1185">Reference proteome</keyword>
<keyword id="KW-0808">Transferase</keyword>
<evidence type="ECO:0000255" key="1">
    <source>
        <dbReference type="HAMAP-Rule" id="MF_00061"/>
    </source>
</evidence>
<accession>A1BHM3</accession>
<proteinExistence type="inferred from homology"/>
<name>ISPE_CHLPD</name>
<protein>
    <recommendedName>
        <fullName evidence="1">4-diphosphocytidyl-2-C-methyl-D-erythritol kinase</fullName>
        <shortName evidence="1">CMK</shortName>
        <ecNumber evidence="1">2.7.1.148</ecNumber>
    </recommendedName>
    <alternativeName>
        <fullName evidence="1">4-(cytidine-5'-diphospho)-2-C-methyl-D-erythritol kinase</fullName>
    </alternativeName>
</protein>
<dbReference type="EC" id="2.7.1.148" evidence="1"/>
<dbReference type="EMBL" id="CP000492">
    <property type="protein sequence ID" value="ABL65900.1"/>
    <property type="molecule type" value="Genomic_DNA"/>
</dbReference>
<dbReference type="RefSeq" id="WP_011745707.1">
    <property type="nucleotide sequence ID" value="NC_008639.1"/>
</dbReference>
<dbReference type="SMR" id="A1BHM3"/>
<dbReference type="STRING" id="290317.Cpha266_1884"/>
<dbReference type="KEGG" id="cph:Cpha266_1884"/>
<dbReference type="eggNOG" id="COG1947">
    <property type="taxonomic scope" value="Bacteria"/>
</dbReference>
<dbReference type="HOGENOM" id="CLU_053057_3_0_10"/>
<dbReference type="OrthoDB" id="9809438at2"/>
<dbReference type="UniPathway" id="UPA00056">
    <property type="reaction ID" value="UER00094"/>
</dbReference>
<dbReference type="Proteomes" id="UP000008701">
    <property type="component" value="Chromosome"/>
</dbReference>
<dbReference type="GO" id="GO:0050515">
    <property type="term" value="F:4-(cytidine 5'-diphospho)-2-C-methyl-D-erythritol kinase activity"/>
    <property type="evidence" value="ECO:0007669"/>
    <property type="project" value="UniProtKB-UniRule"/>
</dbReference>
<dbReference type="GO" id="GO:0005524">
    <property type="term" value="F:ATP binding"/>
    <property type="evidence" value="ECO:0007669"/>
    <property type="project" value="UniProtKB-UniRule"/>
</dbReference>
<dbReference type="GO" id="GO:0019288">
    <property type="term" value="P:isopentenyl diphosphate biosynthetic process, methylerythritol 4-phosphate pathway"/>
    <property type="evidence" value="ECO:0007669"/>
    <property type="project" value="UniProtKB-UniRule"/>
</dbReference>
<dbReference type="GO" id="GO:0016114">
    <property type="term" value="P:terpenoid biosynthetic process"/>
    <property type="evidence" value="ECO:0007669"/>
    <property type="project" value="InterPro"/>
</dbReference>
<dbReference type="Gene3D" id="3.30.230.10">
    <property type="match status" value="1"/>
</dbReference>
<dbReference type="Gene3D" id="3.30.70.890">
    <property type="entry name" value="GHMP kinase, C-terminal domain"/>
    <property type="match status" value="1"/>
</dbReference>
<dbReference type="HAMAP" id="MF_00061">
    <property type="entry name" value="IspE"/>
    <property type="match status" value="1"/>
</dbReference>
<dbReference type="InterPro" id="IPR013750">
    <property type="entry name" value="GHMP_kinase_C_dom"/>
</dbReference>
<dbReference type="InterPro" id="IPR036554">
    <property type="entry name" value="GHMP_kinase_C_sf"/>
</dbReference>
<dbReference type="InterPro" id="IPR006204">
    <property type="entry name" value="GHMP_kinase_N_dom"/>
</dbReference>
<dbReference type="InterPro" id="IPR004424">
    <property type="entry name" value="IspE"/>
</dbReference>
<dbReference type="InterPro" id="IPR020568">
    <property type="entry name" value="Ribosomal_Su5_D2-typ_SF"/>
</dbReference>
<dbReference type="InterPro" id="IPR014721">
    <property type="entry name" value="Ribsml_uS5_D2-typ_fold_subgr"/>
</dbReference>
<dbReference type="NCBIfam" id="TIGR00154">
    <property type="entry name" value="ispE"/>
    <property type="match status" value="1"/>
</dbReference>
<dbReference type="PANTHER" id="PTHR43527">
    <property type="entry name" value="4-DIPHOSPHOCYTIDYL-2-C-METHYL-D-ERYTHRITOL KINASE, CHLOROPLASTIC"/>
    <property type="match status" value="1"/>
</dbReference>
<dbReference type="PANTHER" id="PTHR43527:SF2">
    <property type="entry name" value="4-DIPHOSPHOCYTIDYL-2-C-METHYL-D-ERYTHRITOL KINASE, CHLOROPLASTIC"/>
    <property type="match status" value="1"/>
</dbReference>
<dbReference type="Pfam" id="PF08544">
    <property type="entry name" value="GHMP_kinases_C"/>
    <property type="match status" value="1"/>
</dbReference>
<dbReference type="Pfam" id="PF00288">
    <property type="entry name" value="GHMP_kinases_N"/>
    <property type="match status" value="1"/>
</dbReference>
<dbReference type="PIRSF" id="PIRSF010376">
    <property type="entry name" value="IspE"/>
    <property type="match status" value="1"/>
</dbReference>
<dbReference type="SUPFAM" id="SSF55060">
    <property type="entry name" value="GHMP Kinase, C-terminal domain"/>
    <property type="match status" value="1"/>
</dbReference>
<dbReference type="SUPFAM" id="SSF54211">
    <property type="entry name" value="Ribosomal protein S5 domain 2-like"/>
    <property type="match status" value="1"/>
</dbReference>
<reference key="1">
    <citation type="submission" date="2006-12" db="EMBL/GenBank/DDBJ databases">
        <title>Complete sequence of Chlorobium phaeobacteroides DSM 266.</title>
        <authorList>
            <consortium name="US DOE Joint Genome Institute"/>
            <person name="Copeland A."/>
            <person name="Lucas S."/>
            <person name="Lapidus A."/>
            <person name="Barry K."/>
            <person name="Detter J.C."/>
            <person name="Glavina del Rio T."/>
            <person name="Hammon N."/>
            <person name="Israni S."/>
            <person name="Pitluck S."/>
            <person name="Goltsman E."/>
            <person name="Schmutz J."/>
            <person name="Larimer F."/>
            <person name="Land M."/>
            <person name="Hauser L."/>
            <person name="Mikhailova N."/>
            <person name="Li T."/>
            <person name="Overmann J."/>
            <person name="Bryant D.A."/>
            <person name="Richardson P."/>
        </authorList>
    </citation>
    <scope>NUCLEOTIDE SEQUENCE [LARGE SCALE GENOMIC DNA]</scope>
    <source>
        <strain>DSM 266 / SMG 266 / 2430</strain>
    </source>
</reference>
<organism>
    <name type="scientific">Chlorobium phaeobacteroides (strain DSM 266 / SMG 266 / 2430)</name>
    <dbReference type="NCBI Taxonomy" id="290317"/>
    <lineage>
        <taxon>Bacteria</taxon>
        <taxon>Pseudomonadati</taxon>
        <taxon>Chlorobiota</taxon>
        <taxon>Chlorobiia</taxon>
        <taxon>Chlorobiales</taxon>
        <taxon>Chlorobiaceae</taxon>
        <taxon>Chlorobium/Pelodictyon group</taxon>
        <taxon>Chlorobium</taxon>
    </lineage>
</organism>
<gene>
    <name evidence="1" type="primary">ispE</name>
    <name type="ordered locus">Cpha266_1884</name>
</gene>
<feature type="chain" id="PRO_1000007831" description="4-diphosphocytidyl-2-C-methyl-D-erythritol kinase">
    <location>
        <begin position="1"/>
        <end position="294"/>
    </location>
</feature>
<feature type="active site" evidence="1">
    <location>
        <position position="11"/>
    </location>
</feature>
<feature type="active site" evidence="1">
    <location>
        <position position="135"/>
    </location>
</feature>
<feature type="binding site" evidence="1">
    <location>
        <begin position="93"/>
        <end position="103"/>
    </location>
    <ligand>
        <name>ATP</name>
        <dbReference type="ChEBI" id="CHEBI:30616"/>
    </ligand>
</feature>
<sequence>MDHLSVKSFAKINLGLLITGKRKDGYHTLETIFAPINWYDTIGFSDSDVISMSCSNIDLPVDDNNLCIRAARALQQSASCSKGAAMNLQKVVPFGAGLGGGSSDAATVLRVLNELWKINVSSAELHELAVKLGADVPYFLEMKGLAFARGIGDELEDLGLTLPFHVVTVFPEEHISTVWAYKNFYQKFDRPVPDLRLLLQRLCLDGDRSVLGAFENDFEPAVFDHYPKVRVVKESLLDAGSFYASLSGSGSAVFGLFDTLENAAGAVCAMQQKGYRVTLTPPGFSMEAQAGSRL</sequence>